<comment type="function">
    <text evidence="1">This protein binds to the 23S rRNA, and is important in its secondary structure. It is located near the subunit interface in the base of the L7/L12 stalk, and near the tRNA binding site of the peptidyltransferase center.</text>
</comment>
<comment type="subunit">
    <text evidence="1">Part of the 50S ribosomal subunit.</text>
</comment>
<comment type="similarity">
    <text evidence="1">Belongs to the universal ribosomal protein uL6 family.</text>
</comment>
<feature type="chain" id="PRO_1000055259" description="Large ribosomal subunit protein uL6">
    <location>
        <begin position="1"/>
        <end position="182"/>
    </location>
</feature>
<organism>
    <name type="scientific">Methanococcus maripaludis (strain C7 / ATCC BAA-1331)</name>
    <dbReference type="NCBI Taxonomy" id="426368"/>
    <lineage>
        <taxon>Archaea</taxon>
        <taxon>Methanobacteriati</taxon>
        <taxon>Methanobacteriota</taxon>
        <taxon>Methanomada group</taxon>
        <taxon>Methanococci</taxon>
        <taxon>Methanococcales</taxon>
        <taxon>Methanococcaceae</taxon>
        <taxon>Methanococcus</taxon>
    </lineage>
</organism>
<protein>
    <recommendedName>
        <fullName evidence="1">Large ribosomal subunit protein uL6</fullName>
    </recommendedName>
    <alternativeName>
        <fullName evidence="2">50S ribosomal protein L6</fullName>
    </alternativeName>
</protein>
<dbReference type="EMBL" id="CP000745">
    <property type="protein sequence ID" value="ABR65727.1"/>
    <property type="molecule type" value="Genomic_DNA"/>
</dbReference>
<dbReference type="SMR" id="A6VH01"/>
<dbReference type="STRING" id="426368.MmarC7_0660"/>
<dbReference type="KEGG" id="mmz:MmarC7_0660"/>
<dbReference type="eggNOG" id="arCOG04090">
    <property type="taxonomic scope" value="Archaea"/>
</dbReference>
<dbReference type="HOGENOM" id="CLU_065464_0_0_2"/>
<dbReference type="OrthoDB" id="7144at2157"/>
<dbReference type="GO" id="GO:0022625">
    <property type="term" value="C:cytosolic large ribosomal subunit"/>
    <property type="evidence" value="ECO:0007669"/>
    <property type="project" value="TreeGrafter"/>
</dbReference>
<dbReference type="GO" id="GO:0019843">
    <property type="term" value="F:rRNA binding"/>
    <property type="evidence" value="ECO:0007669"/>
    <property type="project" value="UniProtKB-UniRule"/>
</dbReference>
<dbReference type="GO" id="GO:0003735">
    <property type="term" value="F:structural constituent of ribosome"/>
    <property type="evidence" value="ECO:0007669"/>
    <property type="project" value="InterPro"/>
</dbReference>
<dbReference type="GO" id="GO:0002181">
    <property type="term" value="P:cytoplasmic translation"/>
    <property type="evidence" value="ECO:0007669"/>
    <property type="project" value="TreeGrafter"/>
</dbReference>
<dbReference type="FunFam" id="3.90.930.12:FF:000008">
    <property type="entry name" value="50S ribosomal protein L6"/>
    <property type="match status" value="1"/>
</dbReference>
<dbReference type="Gene3D" id="3.90.930.12">
    <property type="entry name" value="Ribosomal protein L6, alpha-beta domain"/>
    <property type="match status" value="2"/>
</dbReference>
<dbReference type="HAMAP" id="MF_01365_A">
    <property type="entry name" value="Ribosomal_uL6_A"/>
    <property type="match status" value="1"/>
</dbReference>
<dbReference type="InterPro" id="IPR000702">
    <property type="entry name" value="Ribosomal_uL6-like"/>
</dbReference>
<dbReference type="InterPro" id="IPR036789">
    <property type="entry name" value="Ribosomal_uL6-like_a/b-dom_sf"/>
</dbReference>
<dbReference type="InterPro" id="IPR020040">
    <property type="entry name" value="Ribosomal_uL6_a/b-dom"/>
</dbReference>
<dbReference type="InterPro" id="IPR019907">
    <property type="entry name" value="Ribosomal_uL6_arc"/>
</dbReference>
<dbReference type="InterPro" id="IPR002359">
    <property type="entry name" value="Ribosomal_uL6_CS2"/>
</dbReference>
<dbReference type="NCBIfam" id="NF004037">
    <property type="entry name" value="PRK05518.1"/>
    <property type="match status" value="1"/>
</dbReference>
<dbReference type="NCBIfam" id="TIGR03653">
    <property type="entry name" value="uL6_arch"/>
    <property type="match status" value="1"/>
</dbReference>
<dbReference type="PANTHER" id="PTHR11655:SF16">
    <property type="entry name" value="60S RIBOSOMAL PROTEIN L9"/>
    <property type="match status" value="1"/>
</dbReference>
<dbReference type="PANTHER" id="PTHR11655">
    <property type="entry name" value="60S/50S RIBOSOMAL PROTEIN L6/L9"/>
    <property type="match status" value="1"/>
</dbReference>
<dbReference type="Pfam" id="PF00347">
    <property type="entry name" value="Ribosomal_L6"/>
    <property type="match status" value="2"/>
</dbReference>
<dbReference type="PIRSF" id="PIRSF002162">
    <property type="entry name" value="Ribosomal_L6"/>
    <property type="match status" value="1"/>
</dbReference>
<dbReference type="SUPFAM" id="SSF56053">
    <property type="entry name" value="Ribosomal protein L6"/>
    <property type="match status" value="2"/>
</dbReference>
<dbReference type="PROSITE" id="PS00700">
    <property type="entry name" value="RIBOSOMAL_L6_2"/>
    <property type="match status" value="1"/>
</dbReference>
<accession>A6VH01</accession>
<sequence length="182" mass="19924">MPVAALIREEIEIPENVNVEVNGSTVAVKSGAKELKRDLLYPGIEISTEDGKVVIECTFPRKAQTAIVGTYRSHIQNMITGVTDGFEYKLVIRYAHFPMKVSAKGNTVTIDNFLGEKYTRTAKIMDGVTVKVSGEEVIVSGANKEFVGQTAANIEQATKVKGRDTRIFQDGIYIVEKAGKVL</sequence>
<proteinExistence type="inferred from homology"/>
<reference key="1">
    <citation type="submission" date="2007-06" db="EMBL/GenBank/DDBJ databases">
        <title>Complete sequence of Methanococcus maripaludis C7.</title>
        <authorList>
            <consortium name="US DOE Joint Genome Institute"/>
            <person name="Copeland A."/>
            <person name="Lucas S."/>
            <person name="Lapidus A."/>
            <person name="Barry K."/>
            <person name="Glavina del Rio T."/>
            <person name="Dalin E."/>
            <person name="Tice H."/>
            <person name="Pitluck S."/>
            <person name="Clum A."/>
            <person name="Schmutz J."/>
            <person name="Larimer F."/>
            <person name="Land M."/>
            <person name="Hauser L."/>
            <person name="Kyrpides N."/>
            <person name="Anderson I."/>
            <person name="Sieprawska-Lupa M."/>
            <person name="Whitman W.B."/>
            <person name="Richardson P."/>
        </authorList>
    </citation>
    <scope>NUCLEOTIDE SEQUENCE [LARGE SCALE GENOMIC DNA]</scope>
    <source>
        <strain>C7 / ATCC BAA-1331</strain>
    </source>
</reference>
<gene>
    <name evidence="1" type="primary">rpl6</name>
    <name type="ordered locus">MmarC7_0660</name>
</gene>
<evidence type="ECO:0000255" key="1">
    <source>
        <dbReference type="HAMAP-Rule" id="MF_01365"/>
    </source>
</evidence>
<evidence type="ECO:0000305" key="2"/>
<keyword id="KW-0687">Ribonucleoprotein</keyword>
<keyword id="KW-0689">Ribosomal protein</keyword>
<keyword id="KW-0694">RNA-binding</keyword>
<keyword id="KW-0699">rRNA-binding</keyword>
<name>RL6_METM7</name>